<proteinExistence type="inferred from homology"/>
<sequence>MMNRVMHYFKSLLLLELLAGLWLTLKYTFRPKYTVLYPMEKFPQSPRFRGLHALRRYPNGEERCIACKLCEAVCPALAITIDSAKREDGTRRTTRYDIDLFKCIFCGFCEESCPVDSIVETHILEYHFEKRGENIVTKPQLLAIGDRFEAEIAERRAADAAFR</sequence>
<reference key="1">
    <citation type="journal article" date="2003" name="J. Bacteriol.">
        <title>Comparative analyses of the complete genome sequences of Pierce's disease and citrus variegated chlorosis strains of Xylella fastidiosa.</title>
        <authorList>
            <person name="Van Sluys M.A."/>
            <person name="de Oliveira M.C."/>
            <person name="Monteiro-Vitorello C.B."/>
            <person name="Miyaki C.Y."/>
            <person name="Furlan L.R."/>
            <person name="Camargo L.E.A."/>
            <person name="da Silva A.C.R."/>
            <person name="Moon D.H."/>
            <person name="Takita M.A."/>
            <person name="Lemos E.G.M."/>
            <person name="Machado M.A."/>
            <person name="Ferro M.I.T."/>
            <person name="da Silva F.R."/>
            <person name="Goldman M.H.S."/>
            <person name="Goldman G.H."/>
            <person name="Lemos M.V.F."/>
            <person name="El-Dorry H."/>
            <person name="Tsai S.M."/>
            <person name="Carrer H."/>
            <person name="Carraro D.M."/>
            <person name="de Oliveira R.C."/>
            <person name="Nunes L.R."/>
            <person name="Siqueira W.J."/>
            <person name="Coutinho L.L."/>
            <person name="Kimura E.T."/>
            <person name="Ferro E.S."/>
            <person name="Harakava R."/>
            <person name="Kuramae E.E."/>
            <person name="Marino C.L."/>
            <person name="Giglioti E."/>
            <person name="Abreu I.L."/>
            <person name="Alves L.M.C."/>
            <person name="do Amaral A.M."/>
            <person name="Baia G.S."/>
            <person name="Blanco S.R."/>
            <person name="Brito M.S."/>
            <person name="Cannavan F.S."/>
            <person name="Celestino A.V."/>
            <person name="da Cunha A.F."/>
            <person name="Fenille R.C."/>
            <person name="Ferro J.A."/>
            <person name="Formighieri E.F."/>
            <person name="Kishi L.T."/>
            <person name="Leoni S.G."/>
            <person name="Oliveira A.R."/>
            <person name="Rosa V.E. Jr."/>
            <person name="Sassaki F.T."/>
            <person name="Sena J.A.D."/>
            <person name="de Souza A.A."/>
            <person name="Truffi D."/>
            <person name="Tsukumo F."/>
            <person name="Yanai G.M."/>
            <person name="Zaros L.G."/>
            <person name="Civerolo E.L."/>
            <person name="Simpson A.J.G."/>
            <person name="Almeida N.F. Jr."/>
            <person name="Setubal J.C."/>
            <person name="Kitajima J.P."/>
        </authorList>
    </citation>
    <scope>NUCLEOTIDE SEQUENCE [LARGE SCALE GENOMIC DNA]</scope>
    <source>
        <strain>Temecula1 / ATCC 700964</strain>
    </source>
</reference>
<keyword id="KW-0004">4Fe-4S</keyword>
<keyword id="KW-0997">Cell inner membrane</keyword>
<keyword id="KW-1003">Cell membrane</keyword>
<keyword id="KW-0408">Iron</keyword>
<keyword id="KW-0411">Iron-sulfur</keyword>
<keyword id="KW-0472">Membrane</keyword>
<keyword id="KW-0479">Metal-binding</keyword>
<keyword id="KW-0520">NAD</keyword>
<keyword id="KW-0874">Quinone</keyword>
<keyword id="KW-1185">Reference proteome</keyword>
<keyword id="KW-0677">Repeat</keyword>
<keyword id="KW-1278">Translocase</keyword>
<keyword id="KW-0830">Ubiquinone</keyword>
<protein>
    <recommendedName>
        <fullName evidence="1">NADH-quinone oxidoreductase subunit I</fullName>
        <ecNumber evidence="1">7.1.1.-</ecNumber>
    </recommendedName>
    <alternativeName>
        <fullName evidence="1">NADH dehydrogenase I subunit I</fullName>
    </alternativeName>
    <alternativeName>
        <fullName evidence="1">NDH-1 subunit I</fullName>
    </alternativeName>
</protein>
<name>NUOI_XYLFT</name>
<evidence type="ECO:0000255" key="1">
    <source>
        <dbReference type="HAMAP-Rule" id="MF_01351"/>
    </source>
</evidence>
<comment type="function">
    <text evidence="1">NDH-1 shuttles electrons from NADH, via FMN and iron-sulfur (Fe-S) centers, to quinones in the respiratory chain. The immediate electron acceptor for the enzyme in this species is believed to be ubiquinone. Couples the redox reaction to proton translocation (for every two electrons transferred, four hydrogen ions are translocated across the cytoplasmic membrane), and thus conserves the redox energy in a proton gradient.</text>
</comment>
<comment type="catalytic activity">
    <reaction evidence="1">
        <text>a quinone + NADH + 5 H(+)(in) = a quinol + NAD(+) + 4 H(+)(out)</text>
        <dbReference type="Rhea" id="RHEA:57888"/>
        <dbReference type="ChEBI" id="CHEBI:15378"/>
        <dbReference type="ChEBI" id="CHEBI:24646"/>
        <dbReference type="ChEBI" id="CHEBI:57540"/>
        <dbReference type="ChEBI" id="CHEBI:57945"/>
        <dbReference type="ChEBI" id="CHEBI:132124"/>
    </reaction>
</comment>
<comment type="cofactor">
    <cofactor evidence="1">
        <name>[4Fe-4S] cluster</name>
        <dbReference type="ChEBI" id="CHEBI:49883"/>
    </cofactor>
    <text evidence="1">Binds 2 [4Fe-4S] clusters per subunit.</text>
</comment>
<comment type="subunit">
    <text evidence="1">NDH-1 is composed of 14 different subunits. Subunits NuoA, H, J, K, L, M, N constitute the membrane sector of the complex.</text>
</comment>
<comment type="subcellular location">
    <subcellularLocation>
        <location evidence="1">Cell inner membrane</location>
        <topology evidence="1">Peripheral membrane protein</topology>
    </subcellularLocation>
</comment>
<comment type="similarity">
    <text evidence="1">Belongs to the complex I 23 kDa subunit family.</text>
</comment>
<dbReference type="EC" id="7.1.1.-" evidence="1"/>
<dbReference type="EMBL" id="AE009442">
    <property type="protein sequence ID" value="AAO28142.1"/>
    <property type="molecule type" value="Genomic_DNA"/>
</dbReference>
<dbReference type="SMR" id="Q87EP7"/>
<dbReference type="KEGG" id="xft:PD_0256"/>
<dbReference type="HOGENOM" id="CLU_067218_5_1_6"/>
<dbReference type="Proteomes" id="UP000002516">
    <property type="component" value="Chromosome"/>
</dbReference>
<dbReference type="GO" id="GO:0005886">
    <property type="term" value="C:plasma membrane"/>
    <property type="evidence" value="ECO:0007669"/>
    <property type="project" value="UniProtKB-SubCell"/>
</dbReference>
<dbReference type="GO" id="GO:0051539">
    <property type="term" value="F:4 iron, 4 sulfur cluster binding"/>
    <property type="evidence" value="ECO:0007669"/>
    <property type="project" value="UniProtKB-KW"/>
</dbReference>
<dbReference type="GO" id="GO:0005506">
    <property type="term" value="F:iron ion binding"/>
    <property type="evidence" value="ECO:0007669"/>
    <property type="project" value="UniProtKB-UniRule"/>
</dbReference>
<dbReference type="GO" id="GO:0050136">
    <property type="term" value="F:NADH:ubiquinone reductase (non-electrogenic) activity"/>
    <property type="evidence" value="ECO:0007669"/>
    <property type="project" value="UniProtKB-UniRule"/>
</dbReference>
<dbReference type="GO" id="GO:0048038">
    <property type="term" value="F:quinone binding"/>
    <property type="evidence" value="ECO:0007669"/>
    <property type="project" value="UniProtKB-KW"/>
</dbReference>
<dbReference type="GO" id="GO:0009060">
    <property type="term" value="P:aerobic respiration"/>
    <property type="evidence" value="ECO:0007669"/>
    <property type="project" value="TreeGrafter"/>
</dbReference>
<dbReference type="FunFam" id="3.30.70.3270:FF:000003">
    <property type="entry name" value="NADH-quinone oxidoreductase subunit I"/>
    <property type="match status" value="1"/>
</dbReference>
<dbReference type="Gene3D" id="3.30.70.3270">
    <property type="match status" value="1"/>
</dbReference>
<dbReference type="HAMAP" id="MF_01351">
    <property type="entry name" value="NDH1_NuoI"/>
    <property type="match status" value="1"/>
</dbReference>
<dbReference type="InterPro" id="IPR017896">
    <property type="entry name" value="4Fe4S_Fe-S-bd"/>
</dbReference>
<dbReference type="InterPro" id="IPR017900">
    <property type="entry name" value="4Fe4S_Fe_S_CS"/>
</dbReference>
<dbReference type="InterPro" id="IPR010226">
    <property type="entry name" value="NADH_quinone_OxRdtase_chainI"/>
</dbReference>
<dbReference type="NCBIfam" id="TIGR01971">
    <property type="entry name" value="NuoI"/>
    <property type="match status" value="1"/>
</dbReference>
<dbReference type="NCBIfam" id="NF004538">
    <property type="entry name" value="PRK05888.1-4"/>
    <property type="match status" value="1"/>
</dbReference>
<dbReference type="NCBIfam" id="NF004539">
    <property type="entry name" value="PRK05888.1-5"/>
    <property type="match status" value="1"/>
</dbReference>
<dbReference type="PANTHER" id="PTHR10849:SF20">
    <property type="entry name" value="NADH DEHYDROGENASE [UBIQUINONE] IRON-SULFUR PROTEIN 8, MITOCHONDRIAL"/>
    <property type="match status" value="1"/>
</dbReference>
<dbReference type="PANTHER" id="PTHR10849">
    <property type="entry name" value="NADH DEHYDROGENASE UBIQUINONE IRON-SULFUR PROTEIN 8, MITOCHONDRIAL"/>
    <property type="match status" value="1"/>
</dbReference>
<dbReference type="Pfam" id="PF12838">
    <property type="entry name" value="Fer4_7"/>
    <property type="match status" value="1"/>
</dbReference>
<dbReference type="SUPFAM" id="SSF54862">
    <property type="entry name" value="4Fe-4S ferredoxins"/>
    <property type="match status" value="1"/>
</dbReference>
<dbReference type="PROSITE" id="PS00198">
    <property type="entry name" value="4FE4S_FER_1"/>
    <property type="match status" value="2"/>
</dbReference>
<dbReference type="PROSITE" id="PS51379">
    <property type="entry name" value="4FE4S_FER_2"/>
    <property type="match status" value="2"/>
</dbReference>
<organism>
    <name type="scientific">Xylella fastidiosa (strain Temecula1 / ATCC 700964)</name>
    <dbReference type="NCBI Taxonomy" id="183190"/>
    <lineage>
        <taxon>Bacteria</taxon>
        <taxon>Pseudomonadati</taxon>
        <taxon>Pseudomonadota</taxon>
        <taxon>Gammaproteobacteria</taxon>
        <taxon>Lysobacterales</taxon>
        <taxon>Lysobacteraceae</taxon>
        <taxon>Xylella</taxon>
    </lineage>
</organism>
<gene>
    <name evidence="1" type="primary">nuoI</name>
    <name type="ordered locus">PD_0256</name>
</gene>
<accession>Q87EP7</accession>
<feature type="chain" id="PRO_0000250957" description="NADH-quinone oxidoreductase subunit I">
    <location>
        <begin position="1"/>
        <end position="163"/>
    </location>
</feature>
<feature type="domain" description="4Fe-4S ferredoxin-type 1" evidence="1">
    <location>
        <begin position="54"/>
        <end position="84"/>
    </location>
</feature>
<feature type="domain" description="4Fe-4S ferredoxin-type 2" evidence="1">
    <location>
        <begin position="94"/>
        <end position="123"/>
    </location>
</feature>
<feature type="binding site" evidence="1">
    <location>
        <position position="64"/>
    </location>
    <ligand>
        <name>[4Fe-4S] cluster</name>
        <dbReference type="ChEBI" id="CHEBI:49883"/>
        <label>1</label>
    </ligand>
</feature>
<feature type="binding site" evidence="1">
    <location>
        <position position="67"/>
    </location>
    <ligand>
        <name>[4Fe-4S] cluster</name>
        <dbReference type="ChEBI" id="CHEBI:49883"/>
        <label>1</label>
    </ligand>
</feature>
<feature type="binding site" evidence="1">
    <location>
        <position position="70"/>
    </location>
    <ligand>
        <name>[4Fe-4S] cluster</name>
        <dbReference type="ChEBI" id="CHEBI:49883"/>
        <label>1</label>
    </ligand>
</feature>
<feature type="binding site" evidence="1">
    <location>
        <position position="74"/>
    </location>
    <ligand>
        <name>[4Fe-4S] cluster</name>
        <dbReference type="ChEBI" id="CHEBI:49883"/>
        <label>2</label>
    </ligand>
</feature>
<feature type="binding site" evidence="1">
    <location>
        <position position="103"/>
    </location>
    <ligand>
        <name>[4Fe-4S] cluster</name>
        <dbReference type="ChEBI" id="CHEBI:49883"/>
        <label>2</label>
    </ligand>
</feature>
<feature type="binding site" evidence="1">
    <location>
        <position position="106"/>
    </location>
    <ligand>
        <name>[4Fe-4S] cluster</name>
        <dbReference type="ChEBI" id="CHEBI:49883"/>
        <label>2</label>
    </ligand>
</feature>
<feature type="binding site" evidence="1">
    <location>
        <position position="109"/>
    </location>
    <ligand>
        <name>[4Fe-4S] cluster</name>
        <dbReference type="ChEBI" id="CHEBI:49883"/>
        <label>2</label>
    </ligand>
</feature>
<feature type="binding site" evidence="1">
    <location>
        <position position="113"/>
    </location>
    <ligand>
        <name>[4Fe-4S] cluster</name>
        <dbReference type="ChEBI" id="CHEBI:49883"/>
        <label>1</label>
    </ligand>
</feature>